<protein>
    <recommendedName>
        <fullName>Transmembrane protein 141</fullName>
    </recommendedName>
</protein>
<keyword id="KW-0472">Membrane</keyword>
<keyword id="KW-1185">Reference proteome</keyword>
<keyword id="KW-0812">Transmembrane</keyword>
<keyword id="KW-1133">Transmembrane helix</keyword>
<name>TM141_DANRE</name>
<proteinExistence type="evidence at transcript level"/>
<gene>
    <name type="primary">tmem141</name>
    <name type="ORF">zgc:153677</name>
</gene>
<accession>Q0D285</accession>
<evidence type="ECO:0000255" key="1"/>
<evidence type="ECO:0000256" key="2">
    <source>
        <dbReference type="SAM" id="MobiDB-lite"/>
    </source>
</evidence>
<evidence type="ECO:0000305" key="3"/>
<feature type="chain" id="PRO_0000293710" description="Transmembrane protein 141">
    <location>
        <begin position="1"/>
        <end position="124"/>
    </location>
</feature>
<feature type="transmembrane region" description="Helical" evidence="1">
    <location>
        <begin position="29"/>
        <end position="48"/>
    </location>
</feature>
<feature type="transmembrane region" description="Helical" evidence="1">
    <location>
        <begin position="60"/>
        <end position="78"/>
    </location>
</feature>
<feature type="region of interest" description="Disordered" evidence="2">
    <location>
        <begin position="97"/>
        <end position="124"/>
    </location>
</feature>
<organism>
    <name type="scientific">Danio rerio</name>
    <name type="common">Zebrafish</name>
    <name type="synonym">Brachydanio rerio</name>
    <dbReference type="NCBI Taxonomy" id="7955"/>
    <lineage>
        <taxon>Eukaryota</taxon>
        <taxon>Metazoa</taxon>
        <taxon>Chordata</taxon>
        <taxon>Craniata</taxon>
        <taxon>Vertebrata</taxon>
        <taxon>Euteleostomi</taxon>
        <taxon>Actinopterygii</taxon>
        <taxon>Neopterygii</taxon>
        <taxon>Teleostei</taxon>
        <taxon>Ostariophysi</taxon>
        <taxon>Cypriniformes</taxon>
        <taxon>Danionidae</taxon>
        <taxon>Danioninae</taxon>
        <taxon>Danio</taxon>
    </lineage>
</organism>
<sequence>MVNIGLSKVDDAIVAKHPGLQQYVACQSYAFMKGTASFILGTVGIFFGQRALQKIIKYPLQWNLFVSIVSSSVFSYSVTRWETMKCSDVWLFLETGNIPDRNSDKEEPETSADSTTTQHEDVLE</sequence>
<dbReference type="EMBL" id="BX276102">
    <property type="protein sequence ID" value="CAM46935.1"/>
    <property type="molecule type" value="Genomic_DNA"/>
</dbReference>
<dbReference type="EMBL" id="BC122376">
    <property type="protein sequence ID" value="AAI22377.1"/>
    <property type="molecule type" value="mRNA"/>
</dbReference>
<dbReference type="RefSeq" id="NP_001070066.1">
    <property type="nucleotide sequence ID" value="NM_001076598.1"/>
</dbReference>
<dbReference type="SMR" id="Q0D285"/>
<dbReference type="FunCoup" id="Q0D285">
    <property type="interactions" value="222"/>
</dbReference>
<dbReference type="STRING" id="7955.ENSDARP00000133632"/>
<dbReference type="PaxDb" id="7955-ENSDARP00000088257"/>
<dbReference type="Ensembl" id="ENSDART00000161252">
    <property type="protein sequence ID" value="ENSDARP00000133632"/>
    <property type="gene ID" value="ENSDARG00000101963"/>
</dbReference>
<dbReference type="GeneID" id="767658"/>
<dbReference type="KEGG" id="dre:767658"/>
<dbReference type="AGR" id="ZFIN:ZDB-GENE-060929-272"/>
<dbReference type="CTD" id="85014"/>
<dbReference type="ZFIN" id="ZDB-GENE-060929-272">
    <property type="gene designation" value="tmem141"/>
</dbReference>
<dbReference type="eggNOG" id="ENOG502SFAD">
    <property type="taxonomic scope" value="Eukaryota"/>
</dbReference>
<dbReference type="HOGENOM" id="CLU_163737_0_0_1"/>
<dbReference type="InParanoid" id="Q0D285"/>
<dbReference type="OMA" id="CQSNAFM"/>
<dbReference type="OrthoDB" id="10056589at2759"/>
<dbReference type="PhylomeDB" id="Q0D285"/>
<dbReference type="TreeFam" id="TF330755"/>
<dbReference type="PRO" id="PR:Q0D285"/>
<dbReference type="Proteomes" id="UP000000437">
    <property type="component" value="Chromosome 5"/>
</dbReference>
<dbReference type="Bgee" id="ENSDARG00000101963">
    <property type="expression patterns" value="Expressed in muscle tissue and 21 other cell types or tissues"/>
</dbReference>
<dbReference type="GO" id="GO:0016020">
    <property type="term" value="C:membrane"/>
    <property type="evidence" value="ECO:0007669"/>
    <property type="project" value="UniProtKB-SubCell"/>
</dbReference>
<dbReference type="Gene3D" id="1.10.3350.20">
    <property type="entry name" value="Tmem141 protein family"/>
    <property type="match status" value="1"/>
</dbReference>
<dbReference type="InterPro" id="IPR026788">
    <property type="entry name" value="Tmem141"/>
</dbReference>
<dbReference type="InterPro" id="IPR038259">
    <property type="entry name" value="Tmem141_sf"/>
</dbReference>
<dbReference type="PANTHER" id="PTHR47229">
    <property type="entry name" value="TRANSMEMBRANE PROTEIN 141"/>
    <property type="match status" value="1"/>
</dbReference>
<dbReference type="PANTHER" id="PTHR47229:SF1">
    <property type="entry name" value="TRANSMEMBRANE PROTEIN 141"/>
    <property type="match status" value="1"/>
</dbReference>
<dbReference type="Pfam" id="PF15110">
    <property type="entry name" value="TMEM141"/>
    <property type="match status" value="1"/>
</dbReference>
<reference key="1">
    <citation type="journal article" date="2013" name="Nature">
        <title>The zebrafish reference genome sequence and its relationship to the human genome.</title>
        <authorList>
            <person name="Howe K."/>
            <person name="Clark M.D."/>
            <person name="Torroja C.F."/>
            <person name="Torrance J."/>
            <person name="Berthelot C."/>
            <person name="Muffato M."/>
            <person name="Collins J.E."/>
            <person name="Humphray S."/>
            <person name="McLaren K."/>
            <person name="Matthews L."/>
            <person name="McLaren S."/>
            <person name="Sealy I."/>
            <person name="Caccamo M."/>
            <person name="Churcher C."/>
            <person name="Scott C."/>
            <person name="Barrett J.C."/>
            <person name="Koch R."/>
            <person name="Rauch G.J."/>
            <person name="White S."/>
            <person name="Chow W."/>
            <person name="Kilian B."/>
            <person name="Quintais L.T."/>
            <person name="Guerra-Assuncao J.A."/>
            <person name="Zhou Y."/>
            <person name="Gu Y."/>
            <person name="Yen J."/>
            <person name="Vogel J.H."/>
            <person name="Eyre T."/>
            <person name="Redmond S."/>
            <person name="Banerjee R."/>
            <person name="Chi J."/>
            <person name="Fu B."/>
            <person name="Langley E."/>
            <person name="Maguire S.F."/>
            <person name="Laird G.K."/>
            <person name="Lloyd D."/>
            <person name="Kenyon E."/>
            <person name="Donaldson S."/>
            <person name="Sehra H."/>
            <person name="Almeida-King J."/>
            <person name="Loveland J."/>
            <person name="Trevanion S."/>
            <person name="Jones M."/>
            <person name="Quail M."/>
            <person name="Willey D."/>
            <person name="Hunt A."/>
            <person name="Burton J."/>
            <person name="Sims S."/>
            <person name="McLay K."/>
            <person name="Plumb B."/>
            <person name="Davis J."/>
            <person name="Clee C."/>
            <person name="Oliver K."/>
            <person name="Clark R."/>
            <person name="Riddle C."/>
            <person name="Elliot D."/>
            <person name="Threadgold G."/>
            <person name="Harden G."/>
            <person name="Ware D."/>
            <person name="Begum S."/>
            <person name="Mortimore B."/>
            <person name="Kerry G."/>
            <person name="Heath P."/>
            <person name="Phillimore B."/>
            <person name="Tracey A."/>
            <person name="Corby N."/>
            <person name="Dunn M."/>
            <person name="Johnson C."/>
            <person name="Wood J."/>
            <person name="Clark S."/>
            <person name="Pelan S."/>
            <person name="Griffiths G."/>
            <person name="Smith M."/>
            <person name="Glithero R."/>
            <person name="Howden P."/>
            <person name="Barker N."/>
            <person name="Lloyd C."/>
            <person name="Stevens C."/>
            <person name="Harley J."/>
            <person name="Holt K."/>
            <person name="Panagiotidis G."/>
            <person name="Lovell J."/>
            <person name="Beasley H."/>
            <person name="Henderson C."/>
            <person name="Gordon D."/>
            <person name="Auger K."/>
            <person name="Wright D."/>
            <person name="Collins J."/>
            <person name="Raisen C."/>
            <person name="Dyer L."/>
            <person name="Leung K."/>
            <person name="Robertson L."/>
            <person name="Ambridge K."/>
            <person name="Leongamornlert D."/>
            <person name="McGuire S."/>
            <person name="Gilderthorp R."/>
            <person name="Griffiths C."/>
            <person name="Manthravadi D."/>
            <person name="Nichol S."/>
            <person name="Barker G."/>
            <person name="Whitehead S."/>
            <person name="Kay M."/>
            <person name="Brown J."/>
            <person name="Murnane C."/>
            <person name="Gray E."/>
            <person name="Humphries M."/>
            <person name="Sycamore N."/>
            <person name="Barker D."/>
            <person name="Saunders D."/>
            <person name="Wallis J."/>
            <person name="Babbage A."/>
            <person name="Hammond S."/>
            <person name="Mashreghi-Mohammadi M."/>
            <person name="Barr L."/>
            <person name="Martin S."/>
            <person name="Wray P."/>
            <person name="Ellington A."/>
            <person name="Matthews N."/>
            <person name="Ellwood M."/>
            <person name="Woodmansey R."/>
            <person name="Clark G."/>
            <person name="Cooper J."/>
            <person name="Tromans A."/>
            <person name="Grafham D."/>
            <person name="Skuce C."/>
            <person name="Pandian R."/>
            <person name="Andrews R."/>
            <person name="Harrison E."/>
            <person name="Kimberley A."/>
            <person name="Garnett J."/>
            <person name="Fosker N."/>
            <person name="Hall R."/>
            <person name="Garner P."/>
            <person name="Kelly D."/>
            <person name="Bird C."/>
            <person name="Palmer S."/>
            <person name="Gehring I."/>
            <person name="Berger A."/>
            <person name="Dooley C.M."/>
            <person name="Ersan-Urun Z."/>
            <person name="Eser C."/>
            <person name="Geiger H."/>
            <person name="Geisler M."/>
            <person name="Karotki L."/>
            <person name="Kirn A."/>
            <person name="Konantz J."/>
            <person name="Konantz M."/>
            <person name="Oberlander M."/>
            <person name="Rudolph-Geiger S."/>
            <person name="Teucke M."/>
            <person name="Lanz C."/>
            <person name="Raddatz G."/>
            <person name="Osoegawa K."/>
            <person name="Zhu B."/>
            <person name="Rapp A."/>
            <person name="Widaa S."/>
            <person name="Langford C."/>
            <person name="Yang F."/>
            <person name="Schuster S.C."/>
            <person name="Carter N.P."/>
            <person name="Harrow J."/>
            <person name="Ning Z."/>
            <person name="Herrero J."/>
            <person name="Searle S.M."/>
            <person name="Enright A."/>
            <person name="Geisler R."/>
            <person name="Plasterk R.H."/>
            <person name="Lee C."/>
            <person name="Westerfield M."/>
            <person name="de Jong P.J."/>
            <person name="Zon L.I."/>
            <person name="Postlethwait J.H."/>
            <person name="Nusslein-Volhard C."/>
            <person name="Hubbard T.J."/>
            <person name="Roest Crollius H."/>
            <person name="Rogers J."/>
            <person name="Stemple D.L."/>
        </authorList>
    </citation>
    <scope>NUCLEOTIDE SEQUENCE [LARGE SCALE GENOMIC DNA]</scope>
    <source>
        <strain>Tuebingen</strain>
    </source>
</reference>
<reference key="2">
    <citation type="submission" date="2006-08" db="EMBL/GenBank/DDBJ databases">
        <authorList>
            <consortium name="NIH - Zebrafish Gene Collection (ZGC) project"/>
        </authorList>
    </citation>
    <scope>NUCLEOTIDE SEQUENCE [LARGE SCALE MRNA]</scope>
    <source>
        <tissue>Ovary</tissue>
    </source>
</reference>
<comment type="subcellular location">
    <subcellularLocation>
        <location evidence="3">Membrane</location>
        <topology evidence="3">Multi-pass membrane protein</topology>
    </subcellularLocation>
</comment>
<comment type="similarity">
    <text evidence="3">Belongs to the TMEM141 family.</text>
</comment>